<comment type="function">
    <text evidence="1">Catalyzes the attachment of isoleucine to tRNA(Ile). As IleRS can inadvertently accommodate and process structurally similar amino acids such as valine, to avoid such errors it has two additional distinct tRNA(Ile)-dependent editing activities. One activity is designated as 'pretransfer' editing and involves the hydrolysis of activated Val-AMP. The other activity is designated 'posttransfer' editing and involves deacylation of mischarged Val-tRNA(Ile) (By similarity).</text>
</comment>
<comment type="catalytic activity">
    <reaction>
        <text>tRNA(Ile) + L-isoleucine + ATP = L-isoleucyl-tRNA(Ile) + AMP + diphosphate</text>
        <dbReference type="Rhea" id="RHEA:11060"/>
        <dbReference type="Rhea" id="RHEA-COMP:9666"/>
        <dbReference type="Rhea" id="RHEA-COMP:9695"/>
        <dbReference type="ChEBI" id="CHEBI:30616"/>
        <dbReference type="ChEBI" id="CHEBI:33019"/>
        <dbReference type="ChEBI" id="CHEBI:58045"/>
        <dbReference type="ChEBI" id="CHEBI:78442"/>
        <dbReference type="ChEBI" id="CHEBI:78528"/>
        <dbReference type="ChEBI" id="CHEBI:456215"/>
        <dbReference type="EC" id="6.1.1.5"/>
    </reaction>
</comment>
<comment type="cofactor">
    <cofactor evidence="1">
        <name>Zn(2+)</name>
        <dbReference type="ChEBI" id="CHEBI:29105"/>
    </cofactor>
</comment>
<comment type="subunit">
    <text evidence="1">Monomer.</text>
</comment>
<comment type="subcellular location">
    <subcellularLocation>
        <location evidence="1">Cytoplasm</location>
    </subcellularLocation>
</comment>
<comment type="domain">
    <text evidence="1">IleRS has two distinct active sites: one for aminoacylation and one for editing. The misactivated valine is translocated from the active site to the editing site, which sterically excludes the correctly activated isoleucine. The single editing site contains two valyl binding pockets, one specific for each substrate (Val-AMP or Val-tRNA(Ile)) (By similarity).</text>
</comment>
<comment type="similarity">
    <text evidence="2">Belongs to the class-I aminoacyl-tRNA synthetase family. IleS type 2 subfamily.</text>
</comment>
<proteinExistence type="inferred from homology"/>
<feature type="chain" id="PRO_0000428472" description="Isoleucine--tRNA ligase">
    <location>
        <begin position="1"/>
        <end position="1041"/>
    </location>
</feature>
<feature type="short sequence motif" description="'HIGH' region">
    <location>
        <begin position="53"/>
        <end position="63"/>
    </location>
</feature>
<feature type="short sequence motif" description="'KMSKS' region">
    <location>
        <begin position="619"/>
        <end position="623"/>
    </location>
</feature>
<feature type="binding site" evidence="1">
    <location>
        <position position="622"/>
    </location>
    <ligand>
        <name>ATP</name>
        <dbReference type="ChEBI" id="CHEBI:30616"/>
    </ligand>
</feature>
<gene>
    <name type="primary">ileS</name>
    <name type="ordered locus">MT1587</name>
</gene>
<reference key="1">
    <citation type="journal article" date="2002" name="J. Bacteriol.">
        <title>Whole-genome comparison of Mycobacterium tuberculosis clinical and laboratory strains.</title>
        <authorList>
            <person name="Fleischmann R.D."/>
            <person name="Alland D."/>
            <person name="Eisen J.A."/>
            <person name="Carpenter L."/>
            <person name="White O."/>
            <person name="Peterson J.D."/>
            <person name="DeBoy R.T."/>
            <person name="Dodson R.J."/>
            <person name="Gwinn M.L."/>
            <person name="Haft D.H."/>
            <person name="Hickey E.K."/>
            <person name="Kolonay J.F."/>
            <person name="Nelson W.C."/>
            <person name="Umayam L.A."/>
            <person name="Ermolaeva M.D."/>
            <person name="Salzberg S.L."/>
            <person name="Delcher A."/>
            <person name="Utterback T.R."/>
            <person name="Weidman J.F."/>
            <person name="Khouri H.M."/>
            <person name="Gill J."/>
            <person name="Mikula A."/>
            <person name="Bishai W."/>
            <person name="Jacobs W.R. Jr."/>
            <person name="Venter J.C."/>
            <person name="Fraser C.M."/>
        </authorList>
    </citation>
    <scope>NUCLEOTIDE SEQUENCE [LARGE SCALE GENOMIC DNA]</scope>
    <source>
        <strain>CDC 1551 / Oshkosh</strain>
    </source>
</reference>
<dbReference type="EC" id="6.1.1.5"/>
<dbReference type="EMBL" id="AE000516">
    <property type="protein sequence ID" value="AAK45854.1"/>
    <property type="molecule type" value="Genomic_DNA"/>
</dbReference>
<dbReference type="PIR" id="E70760">
    <property type="entry name" value="E70760"/>
</dbReference>
<dbReference type="RefSeq" id="WP_003407714.1">
    <property type="nucleotide sequence ID" value="NZ_KK341227.1"/>
</dbReference>
<dbReference type="SMR" id="P9WFV2"/>
<dbReference type="KEGG" id="mtc:MT1587"/>
<dbReference type="PATRIC" id="fig|83331.31.peg.1709"/>
<dbReference type="HOGENOM" id="CLU_001493_1_1_11"/>
<dbReference type="Proteomes" id="UP000001020">
    <property type="component" value="Chromosome"/>
</dbReference>
<dbReference type="GO" id="GO:0005737">
    <property type="term" value="C:cytoplasm"/>
    <property type="evidence" value="ECO:0007669"/>
    <property type="project" value="UniProtKB-SubCell"/>
</dbReference>
<dbReference type="GO" id="GO:0002161">
    <property type="term" value="F:aminoacyl-tRNA deacylase activity"/>
    <property type="evidence" value="ECO:0007669"/>
    <property type="project" value="InterPro"/>
</dbReference>
<dbReference type="GO" id="GO:0005524">
    <property type="term" value="F:ATP binding"/>
    <property type="evidence" value="ECO:0007669"/>
    <property type="project" value="UniProtKB-UniRule"/>
</dbReference>
<dbReference type="GO" id="GO:0004822">
    <property type="term" value="F:isoleucine-tRNA ligase activity"/>
    <property type="evidence" value="ECO:0007669"/>
    <property type="project" value="UniProtKB-UniRule"/>
</dbReference>
<dbReference type="GO" id="GO:0000049">
    <property type="term" value="F:tRNA binding"/>
    <property type="evidence" value="ECO:0007669"/>
    <property type="project" value="InterPro"/>
</dbReference>
<dbReference type="GO" id="GO:0008270">
    <property type="term" value="F:zinc ion binding"/>
    <property type="evidence" value="ECO:0007669"/>
    <property type="project" value="UniProtKB-UniRule"/>
</dbReference>
<dbReference type="GO" id="GO:0006428">
    <property type="term" value="P:isoleucyl-tRNA aminoacylation"/>
    <property type="evidence" value="ECO:0007669"/>
    <property type="project" value="UniProtKB-UniRule"/>
</dbReference>
<dbReference type="GO" id="GO:0046677">
    <property type="term" value="P:response to antibiotic"/>
    <property type="evidence" value="ECO:0007669"/>
    <property type="project" value="UniProtKB-KW"/>
</dbReference>
<dbReference type="CDD" id="cd07961">
    <property type="entry name" value="Anticodon_Ia_Ile_ABEc"/>
    <property type="match status" value="1"/>
</dbReference>
<dbReference type="CDD" id="cd00818">
    <property type="entry name" value="IleRS_core"/>
    <property type="match status" value="1"/>
</dbReference>
<dbReference type="FunFam" id="3.40.50.620:FF:000063">
    <property type="entry name" value="Isoleucine--tRNA ligase"/>
    <property type="match status" value="1"/>
</dbReference>
<dbReference type="FunFam" id="3.40.50.620:FF:000075">
    <property type="entry name" value="Isoleucine--tRNA ligase"/>
    <property type="match status" value="1"/>
</dbReference>
<dbReference type="Gene3D" id="3.40.50.620">
    <property type="entry name" value="HUPs"/>
    <property type="match status" value="2"/>
</dbReference>
<dbReference type="Gene3D" id="1.10.730.10">
    <property type="entry name" value="Isoleucyl-tRNA Synthetase, Domain 1"/>
    <property type="match status" value="1"/>
</dbReference>
<dbReference type="Gene3D" id="3.90.740.10">
    <property type="entry name" value="Valyl/Leucyl/Isoleucyl-tRNA synthetase, editing domain"/>
    <property type="match status" value="1"/>
</dbReference>
<dbReference type="HAMAP" id="MF_02003">
    <property type="entry name" value="Ile_tRNA_synth_type2"/>
    <property type="match status" value="1"/>
</dbReference>
<dbReference type="InterPro" id="IPR001412">
    <property type="entry name" value="aa-tRNA-synth_I_CS"/>
</dbReference>
<dbReference type="InterPro" id="IPR002300">
    <property type="entry name" value="aa-tRNA-synth_Ia"/>
</dbReference>
<dbReference type="InterPro" id="IPR033709">
    <property type="entry name" value="Anticodon_Ile_ABEc"/>
</dbReference>
<dbReference type="InterPro" id="IPR002301">
    <property type="entry name" value="Ile-tRNA-ligase"/>
</dbReference>
<dbReference type="InterPro" id="IPR023586">
    <property type="entry name" value="Ile-tRNA-ligase_type2"/>
</dbReference>
<dbReference type="InterPro" id="IPR013155">
    <property type="entry name" value="M/V/L/I-tRNA-synth_anticd-bd"/>
</dbReference>
<dbReference type="InterPro" id="IPR014729">
    <property type="entry name" value="Rossmann-like_a/b/a_fold"/>
</dbReference>
<dbReference type="InterPro" id="IPR009080">
    <property type="entry name" value="tRNAsynth_Ia_anticodon-bd"/>
</dbReference>
<dbReference type="InterPro" id="IPR009008">
    <property type="entry name" value="Val/Leu/Ile-tRNA-synth_edit"/>
</dbReference>
<dbReference type="NCBIfam" id="TIGR00392">
    <property type="entry name" value="ileS"/>
    <property type="match status" value="1"/>
</dbReference>
<dbReference type="PANTHER" id="PTHR42780:SF1">
    <property type="entry name" value="ISOLEUCINE--TRNA LIGASE, CYTOPLASMIC"/>
    <property type="match status" value="1"/>
</dbReference>
<dbReference type="PANTHER" id="PTHR42780">
    <property type="entry name" value="SOLEUCYL-TRNA SYNTHETASE"/>
    <property type="match status" value="1"/>
</dbReference>
<dbReference type="Pfam" id="PF08264">
    <property type="entry name" value="Anticodon_1"/>
    <property type="match status" value="1"/>
</dbReference>
<dbReference type="Pfam" id="PF19302">
    <property type="entry name" value="DUF5915"/>
    <property type="match status" value="1"/>
</dbReference>
<dbReference type="Pfam" id="PF00133">
    <property type="entry name" value="tRNA-synt_1"/>
    <property type="match status" value="1"/>
</dbReference>
<dbReference type="PRINTS" id="PR00984">
    <property type="entry name" value="TRNASYNTHILE"/>
</dbReference>
<dbReference type="SUPFAM" id="SSF47323">
    <property type="entry name" value="Anticodon-binding domain of a subclass of class I aminoacyl-tRNA synthetases"/>
    <property type="match status" value="1"/>
</dbReference>
<dbReference type="SUPFAM" id="SSF52374">
    <property type="entry name" value="Nucleotidylyl transferase"/>
    <property type="match status" value="1"/>
</dbReference>
<dbReference type="SUPFAM" id="SSF50677">
    <property type="entry name" value="ValRS/IleRS/LeuRS editing domain"/>
    <property type="match status" value="1"/>
</dbReference>
<dbReference type="PROSITE" id="PS00178">
    <property type="entry name" value="AA_TRNA_LIGASE_I"/>
    <property type="match status" value="1"/>
</dbReference>
<organism>
    <name type="scientific">Mycobacterium tuberculosis (strain CDC 1551 / Oshkosh)</name>
    <dbReference type="NCBI Taxonomy" id="83331"/>
    <lineage>
        <taxon>Bacteria</taxon>
        <taxon>Bacillati</taxon>
        <taxon>Actinomycetota</taxon>
        <taxon>Actinomycetes</taxon>
        <taxon>Mycobacteriales</taxon>
        <taxon>Mycobacteriaceae</taxon>
        <taxon>Mycobacterium</taxon>
        <taxon>Mycobacterium tuberculosis complex</taxon>
    </lineage>
</organism>
<name>SYI_MYCTO</name>
<evidence type="ECO:0000250" key="1"/>
<evidence type="ECO:0000305" key="2"/>
<protein>
    <recommendedName>
        <fullName>Isoleucine--tRNA ligase</fullName>
        <ecNumber>6.1.1.5</ecNumber>
    </recommendedName>
    <alternativeName>
        <fullName>Isoleucyl-tRNA synthetase</fullName>
        <shortName>IleRS</shortName>
    </alternativeName>
</protein>
<sequence length="1041" mass="117340">MTDNAYPKLAGGAPDLPALELEVLDYWSRDDTFRASIARRDGAPEYVFYDGPPFANGLPHYGHLLTGYVKDIVPRYRTMRGYKVERRFGWDTHGLPAELEVERQLGITDKSQIEAMGIAAFNDACRASVLRYTDEWQAYVTRQARWVDFDNDYKTLDLAYMESVIWAFKQLWDKGLAYEGYRVLPYCWRDETPLSNHELRMDDDVYQSRQDPAVTVGFKVVGGQPDNGLDGAYLLVWTTTPWTLPSNLAVAVSPDITYVQVQAGDRRFVLAEARLAAYARELGEEPVVLGTYRGAELLGTRYLPPFAYFMDWPNAFQVLAGDFVTTDDGTGIVHMAPAYGEDDMVVAEAVGIAPVTPVDSKGRFDVTVADYQGQHVFDANAQIVRDLKTQSGPAAVNGPVLIRHETYEHPYPHCWRCRNPLIYRSVSSWFVRVTDFRDRMVELNQQITWYPEHVKDGQFGKWLQGARDWSISRNRYWGTPIPVWKSDDPAYPRIDVYGSLDELERDFGVRPANLHRPYIDELTRPNPDDPTGRSTMRRIPDVLDVWFDSGSMPYAQVHYPFENLDWFQGHYPGDFIVEYIGQTRGWFYTLHVLATALFDRPAFKTCVAHGIVLGFDGQKMSKSLRNYPDVTEVFDRDGSDAMRWFLMASPILRGGNLIVTEQGIRDGVRQVLLPLWNTYSFLALYAPKVGTWRVDSVHVLDRYILAKLAVLRDDLSESMEVYDIPGACEHLRQFTEALTNWYVRRSRSRFWAEDADAIDTLHTVLEVTTRLAAPLLPLITEIIWRGLTRERSVHLTDWPAPDLLPSDADLVAAMDQVRDVCSAASSLRKAKKLRVRLPLPKLIVAVENPQLLRPFVDLIGDELNVKQVELTDAIDTYGRFELTVNARVAGPRLGKDVQAAIKAVKAGDGVINPDGTLLAGPAVLTPDEYNSRLVAADPESTAALPDGAGLVVLDGTVTAELEAEGWAKDRIRELQELRKSTGLDVSDRIRVVMSVPAEREDWARTHRDLIAGEILATDFEFADLADGVAIGDGVRVSIEKT</sequence>
<keyword id="KW-0030">Aminoacyl-tRNA synthetase</keyword>
<keyword id="KW-0046">Antibiotic resistance</keyword>
<keyword id="KW-0067">ATP-binding</keyword>
<keyword id="KW-0963">Cytoplasm</keyword>
<keyword id="KW-0436">Ligase</keyword>
<keyword id="KW-0479">Metal-binding</keyword>
<keyword id="KW-0547">Nucleotide-binding</keyword>
<keyword id="KW-0648">Protein biosynthesis</keyword>
<keyword id="KW-1185">Reference proteome</keyword>
<keyword id="KW-0862">Zinc</keyword>
<accession>P9WFV2</accession>
<accession>L0T8J7</accession>
<accession>O06181</accession>
<accession>Q10765</accession>